<protein>
    <recommendedName>
        <fullName evidence="1">Elongation factor Ts</fullName>
        <shortName evidence="1">EF-Ts</shortName>
    </recommendedName>
</protein>
<dbReference type="EMBL" id="CP000930">
    <property type="protein sequence ID" value="ABZ84813.1"/>
    <property type="molecule type" value="Genomic_DNA"/>
</dbReference>
<dbReference type="SMR" id="B0THD8"/>
<dbReference type="STRING" id="498761.HM1_2257"/>
<dbReference type="KEGG" id="hmo:HM1_2257"/>
<dbReference type="eggNOG" id="COG0264">
    <property type="taxonomic scope" value="Bacteria"/>
</dbReference>
<dbReference type="HOGENOM" id="CLU_047155_1_1_9"/>
<dbReference type="Proteomes" id="UP000008550">
    <property type="component" value="Chromosome"/>
</dbReference>
<dbReference type="GO" id="GO:0005737">
    <property type="term" value="C:cytoplasm"/>
    <property type="evidence" value="ECO:0007669"/>
    <property type="project" value="UniProtKB-SubCell"/>
</dbReference>
<dbReference type="GO" id="GO:0003746">
    <property type="term" value="F:translation elongation factor activity"/>
    <property type="evidence" value="ECO:0007669"/>
    <property type="project" value="UniProtKB-UniRule"/>
</dbReference>
<dbReference type="CDD" id="cd14275">
    <property type="entry name" value="UBA_EF-Ts"/>
    <property type="match status" value="1"/>
</dbReference>
<dbReference type="FunFam" id="1.10.286.20:FF:000001">
    <property type="entry name" value="Elongation factor Ts"/>
    <property type="match status" value="1"/>
</dbReference>
<dbReference type="FunFam" id="1.10.8.10:FF:000001">
    <property type="entry name" value="Elongation factor Ts"/>
    <property type="match status" value="1"/>
</dbReference>
<dbReference type="Gene3D" id="1.10.286.20">
    <property type="match status" value="1"/>
</dbReference>
<dbReference type="Gene3D" id="1.10.8.10">
    <property type="entry name" value="DNA helicase RuvA subunit, C-terminal domain"/>
    <property type="match status" value="1"/>
</dbReference>
<dbReference type="Gene3D" id="3.30.479.20">
    <property type="entry name" value="Elongation factor Ts, dimerisation domain"/>
    <property type="match status" value="1"/>
</dbReference>
<dbReference type="HAMAP" id="MF_00050">
    <property type="entry name" value="EF_Ts"/>
    <property type="match status" value="1"/>
</dbReference>
<dbReference type="InterPro" id="IPR036402">
    <property type="entry name" value="EF-Ts_dimer_sf"/>
</dbReference>
<dbReference type="InterPro" id="IPR001816">
    <property type="entry name" value="Transl_elong_EFTs/EF1B"/>
</dbReference>
<dbReference type="InterPro" id="IPR014039">
    <property type="entry name" value="Transl_elong_EFTs/EF1B_dimer"/>
</dbReference>
<dbReference type="InterPro" id="IPR018101">
    <property type="entry name" value="Transl_elong_Ts_CS"/>
</dbReference>
<dbReference type="InterPro" id="IPR009060">
    <property type="entry name" value="UBA-like_sf"/>
</dbReference>
<dbReference type="NCBIfam" id="TIGR00116">
    <property type="entry name" value="tsf"/>
    <property type="match status" value="2"/>
</dbReference>
<dbReference type="PANTHER" id="PTHR11741">
    <property type="entry name" value="ELONGATION FACTOR TS"/>
    <property type="match status" value="1"/>
</dbReference>
<dbReference type="PANTHER" id="PTHR11741:SF0">
    <property type="entry name" value="ELONGATION FACTOR TS, MITOCHONDRIAL"/>
    <property type="match status" value="1"/>
</dbReference>
<dbReference type="Pfam" id="PF00889">
    <property type="entry name" value="EF_TS"/>
    <property type="match status" value="1"/>
</dbReference>
<dbReference type="SUPFAM" id="SSF54713">
    <property type="entry name" value="Elongation factor Ts (EF-Ts), dimerisation domain"/>
    <property type="match status" value="1"/>
</dbReference>
<dbReference type="SUPFAM" id="SSF46934">
    <property type="entry name" value="UBA-like"/>
    <property type="match status" value="1"/>
</dbReference>
<dbReference type="PROSITE" id="PS01126">
    <property type="entry name" value="EF_TS_1"/>
    <property type="match status" value="1"/>
</dbReference>
<dbReference type="PROSITE" id="PS01127">
    <property type="entry name" value="EF_TS_2"/>
    <property type="match status" value="1"/>
</dbReference>
<reference key="1">
    <citation type="journal article" date="2008" name="J. Bacteriol.">
        <title>The genome of Heliobacterium modesticaldum, a phototrophic representative of the Firmicutes containing the simplest photosynthetic apparatus.</title>
        <authorList>
            <person name="Sattley W.M."/>
            <person name="Madigan M.T."/>
            <person name="Swingley W.D."/>
            <person name="Cheung P.C."/>
            <person name="Clocksin K.M."/>
            <person name="Conrad A.L."/>
            <person name="Dejesa L.C."/>
            <person name="Honchak B.M."/>
            <person name="Jung D.O."/>
            <person name="Karbach L.E."/>
            <person name="Kurdoglu A."/>
            <person name="Lahiri S."/>
            <person name="Mastrian S.D."/>
            <person name="Page L.E."/>
            <person name="Taylor H.L."/>
            <person name="Wang Z.T."/>
            <person name="Raymond J."/>
            <person name="Chen M."/>
            <person name="Blankenship R.E."/>
            <person name="Touchman J.W."/>
        </authorList>
    </citation>
    <scope>NUCLEOTIDE SEQUENCE [LARGE SCALE GENOMIC DNA]</scope>
    <source>
        <strain>ATCC 51547 / Ice1</strain>
    </source>
</reference>
<sequence length="215" mass="24020">MVTAAMVKELRERTGAGMMECKKALAHTDGDMEKAVAYLRERGLAAAAKKASRVAAEGLVEAYIHGGGRIGVLVEVNCETDFVAKTDDYKALCKDIAMQIAAAKPEYVRREEVPAEQIEKEKEILRNQALNEGKPEKIVDKMVEGRIEKYFKEICLLEQPFIKNPDVTVQQMITEAVAKIGENINVRRFVRFELGEGLAKRQDDFASEVMAEINK</sequence>
<accession>B0THD8</accession>
<comment type="function">
    <text evidence="1">Associates with the EF-Tu.GDP complex and induces the exchange of GDP to GTP. It remains bound to the aminoacyl-tRNA.EF-Tu.GTP complex up to the GTP hydrolysis stage on the ribosome.</text>
</comment>
<comment type="subcellular location">
    <subcellularLocation>
        <location evidence="1">Cytoplasm</location>
    </subcellularLocation>
</comment>
<comment type="similarity">
    <text evidence="1">Belongs to the EF-Ts family.</text>
</comment>
<name>EFTS_HELMI</name>
<evidence type="ECO:0000255" key="1">
    <source>
        <dbReference type="HAMAP-Rule" id="MF_00050"/>
    </source>
</evidence>
<feature type="chain" id="PRO_1000116743" description="Elongation factor Ts">
    <location>
        <begin position="1"/>
        <end position="215"/>
    </location>
</feature>
<feature type="region of interest" description="Involved in Mg(2+) ion dislocation from EF-Tu" evidence="1">
    <location>
        <begin position="80"/>
        <end position="83"/>
    </location>
</feature>
<organism>
    <name type="scientific">Heliobacterium modesticaldum (strain ATCC 51547 / Ice1)</name>
    <dbReference type="NCBI Taxonomy" id="498761"/>
    <lineage>
        <taxon>Bacteria</taxon>
        <taxon>Bacillati</taxon>
        <taxon>Bacillota</taxon>
        <taxon>Clostridia</taxon>
        <taxon>Eubacteriales</taxon>
        <taxon>Heliobacteriaceae</taxon>
        <taxon>Heliomicrobium</taxon>
    </lineage>
</organism>
<proteinExistence type="inferred from homology"/>
<keyword id="KW-0963">Cytoplasm</keyword>
<keyword id="KW-0251">Elongation factor</keyword>
<keyword id="KW-0648">Protein biosynthesis</keyword>
<keyword id="KW-1185">Reference proteome</keyword>
<gene>
    <name evidence="1" type="primary">tsf</name>
    <name type="ordered locus">Helmi_21880</name>
    <name type="ORF">HM1_2257</name>
</gene>